<evidence type="ECO:0000255" key="1">
    <source>
        <dbReference type="HAMAP-Rule" id="MF_00358"/>
    </source>
</evidence>
<evidence type="ECO:0000305" key="2"/>
<comment type="similarity">
    <text evidence="1">Belongs to the bacterial ribosomal protein bS21 family.</text>
</comment>
<proteinExistence type="inferred from homology"/>
<name>RS21_ANAD2</name>
<organism>
    <name type="scientific">Anaeromyxobacter dehalogenans (strain 2CP-1 / ATCC BAA-258)</name>
    <dbReference type="NCBI Taxonomy" id="455488"/>
    <lineage>
        <taxon>Bacteria</taxon>
        <taxon>Pseudomonadati</taxon>
        <taxon>Myxococcota</taxon>
        <taxon>Myxococcia</taxon>
        <taxon>Myxococcales</taxon>
        <taxon>Cystobacterineae</taxon>
        <taxon>Anaeromyxobacteraceae</taxon>
        <taxon>Anaeromyxobacter</taxon>
    </lineage>
</organism>
<dbReference type="EMBL" id="CP001359">
    <property type="protein sequence ID" value="ACL64109.1"/>
    <property type="molecule type" value="Genomic_DNA"/>
</dbReference>
<dbReference type="RefSeq" id="WP_012524821.1">
    <property type="nucleotide sequence ID" value="NC_011891.1"/>
</dbReference>
<dbReference type="SMR" id="B8JDL4"/>
<dbReference type="KEGG" id="acp:A2cp1_0755"/>
<dbReference type="HOGENOM" id="CLU_159258_1_2_7"/>
<dbReference type="Proteomes" id="UP000007089">
    <property type="component" value="Chromosome"/>
</dbReference>
<dbReference type="GO" id="GO:1990904">
    <property type="term" value="C:ribonucleoprotein complex"/>
    <property type="evidence" value="ECO:0007669"/>
    <property type="project" value="UniProtKB-KW"/>
</dbReference>
<dbReference type="GO" id="GO:0005840">
    <property type="term" value="C:ribosome"/>
    <property type="evidence" value="ECO:0007669"/>
    <property type="project" value="UniProtKB-KW"/>
</dbReference>
<dbReference type="GO" id="GO:0003735">
    <property type="term" value="F:structural constituent of ribosome"/>
    <property type="evidence" value="ECO:0007669"/>
    <property type="project" value="InterPro"/>
</dbReference>
<dbReference type="GO" id="GO:0006412">
    <property type="term" value="P:translation"/>
    <property type="evidence" value="ECO:0007669"/>
    <property type="project" value="UniProtKB-UniRule"/>
</dbReference>
<dbReference type="Gene3D" id="1.20.5.1150">
    <property type="entry name" value="Ribosomal protein S8"/>
    <property type="match status" value="1"/>
</dbReference>
<dbReference type="HAMAP" id="MF_00358">
    <property type="entry name" value="Ribosomal_bS21"/>
    <property type="match status" value="1"/>
</dbReference>
<dbReference type="InterPro" id="IPR001911">
    <property type="entry name" value="Ribosomal_bS21"/>
</dbReference>
<dbReference type="InterPro" id="IPR038380">
    <property type="entry name" value="Ribosomal_bS21_sf"/>
</dbReference>
<dbReference type="NCBIfam" id="TIGR00030">
    <property type="entry name" value="S21p"/>
    <property type="match status" value="1"/>
</dbReference>
<dbReference type="PANTHER" id="PTHR21109">
    <property type="entry name" value="MITOCHONDRIAL 28S RIBOSOMAL PROTEIN S21"/>
    <property type="match status" value="1"/>
</dbReference>
<dbReference type="PANTHER" id="PTHR21109:SF22">
    <property type="entry name" value="SMALL RIBOSOMAL SUBUNIT PROTEIN BS21"/>
    <property type="match status" value="1"/>
</dbReference>
<dbReference type="Pfam" id="PF01165">
    <property type="entry name" value="Ribosomal_S21"/>
    <property type="match status" value="1"/>
</dbReference>
<dbReference type="PRINTS" id="PR00976">
    <property type="entry name" value="RIBOSOMALS21"/>
</dbReference>
<sequence length="64" mass="7510">MTGVRVKDGESFENAMKRFKKQCEKAGILSEIRKREHYEKPSVKRKKKALAAKKRALKKMRKGF</sequence>
<protein>
    <recommendedName>
        <fullName evidence="1">Small ribosomal subunit protein bS21</fullName>
    </recommendedName>
    <alternativeName>
        <fullName evidence="2">30S ribosomal protein S21</fullName>
    </alternativeName>
</protein>
<gene>
    <name evidence="1" type="primary">rpsU</name>
    <name type="ordered locus">A2cp1_0755</name>
</gene>
<accession>B8JDL4</accession>
<keyword id="KW-0687">Ribonucleoprotein</keyword>
<keyword id="KW-0689">Ribosomal protein</keyword>
<feature type="chain" id="PRO_1000133457" description="Small ribosomal subunit protein bS21">
    <location>
        <begin position="1"/>
        <end position="64"/>
    </location>
</feature>
<reference key="1">
    <citation type="submission" date="2009-01" db="EMBL/GenBank/DDBJ databases">
        <title>Complete sequence of Anaeromyxobacter dehalogenans 2CP-1.</title>
        <authorList>
            <person name="Lucas S."/>
            <person name="Copeland A."/>
            <person name="Lapidus A."/>
            <person name="Glavina del Rio T."/>
            <person name="Dalin E."/>
            <person name="Tice H."/>
            <person name="Bruce D."/>
            <person name="Goodwin L."/>
            <person name="Pitluck S."/>
            <person name="Saunders E."/>
            <person name="Brettin T."/>
            <person name="Detter J.C."/>
            <person name="Han C."/>
            <person name="Larimer F."/>
            <person name="Land M."/>
            <person name="Hauser L."/>
            <person name="Kyrpides N."/>
            <person name="Ovchinnikova G."/>
            <person name="Beliaev A.S."/>
            <person name="Richardson P."/>
        </authorList>
    </citation>
    <scope>NUCLEOTIDE SEQUENCE [LARGE SCALE GENOMIC DNA]</scope>
    <source>
        <strain>2CP-1 / ATCC BAA-258</strain>
    </source>
</reference>